<dbReference type="EC" id="2.3.1.82"/>
<dbReference type="EMBL" id="U13880">
    <property type="protein sequence ID" value="AAA90937.1"/>
    <property type="molecule type" value="Genomic_DNA"/>
</dbReference>
<dbReference type="SMR" id="P50858"/>
<dbReference type="BRENDA" id="2.3.1.82">
    <property type="organism ID" value="152"/>
</dbReference>
<dbReference type="GO" id="GO:0047663">
    <property type="term" value="F:aminoglycoside 6'-N-acetyltransferase activity"/>
    <property type="evidence" value="ECO:0007669"/>
    <property type="project" value="UniProtKB-EC"/>
</dbReference>
<dbReference type="GO" id="GO:0046677">
    <property type="term" value="P:response to antibiotic"/>
    <property type="evidence" value="ECO:0000314"/>
    <property type="project" value="UniProtKB"/>
</dbReference>
<dbReference type="CDD" id="cd04301">
    <property type="entry name" value="NAT_SF"/>
    <property type="match status" value="1"/>
</dbReference>
<dbReference type="FunFam" id="3.40.630.30:FF:000071">
    <property type="entry name" value="Acetyltransf_1"/>
    <property type="match status" value="1"/>
</dbReference>
<dbReference type="Gene3D" id="3.40.630.30">
    <property type="match status" value="1"/>
</dbReference>
<dbReference type="InterPro" id="IPR016181">
    <property type="entry name" value="Acyl_CoA_acyltransferase"/>
</dbReference>
<dbReference type="InterPro" id="IPR024170">
    <property type="entry name" value="Aminoglycoside_N6-AcTrfrase"/>
</dbReference>
<dbReference type="InterPro" id="IPR050832">
    <property type="entry name" value="Bact_Acetyltransf"/>
</dbReference>
<dbReference type="InterPro" id="IPR000182">
    <property type="entry name" value="GNAT_dom"/>
</dbReference>
<dbReference type="NCBIfam" id="NF043067">
    <property type="entry name" value="AAC_6p_group_E"/>
    <property type="match status" value="1"/>
</dbReference>
<dbReference type="NCBIfam" id="NF000158">
    <property type="entry name" value="AAC_6p_Il"/>
    <property type="match status" value="1"/>
</dbReference>
<dbReference type="PANTHER" id="PTHR43877:SF2">
    <property type="entry name" value="AMINOALKYLPHOSPHONATE N-ACETYLTRANSFERASE-RELATED"/>
    <property type="match status" value="1"/>
</dbReference>
<dbReference type="PANTHER" id="PTHR43877">
    <property type="entry name" value="AMINOALKYLPHOSPHONATE N-ACETYLTRANSFERASE-RELATED-RELATED"/>
    <property type="match status" value="1"/>
</dbReference>
<dbReference type="Pfam" id="PF00583">
    <property type="entry name" value="Acetyltransf_1"/>
    <property type="match status" value="1"/>
</dbReference>
<dbReference type="PIRSF" id="PIRSF000452">
    <property type="entry name" value="6-N-acetyltransf"/>
    <property type="match status" value="1"/>
</dbReference>
<dbReference type="SUPFAM" id="SSF55729">
    <property type="entry name" value="Acyl-CoA N-acyltransferases (Nat)"/>
    <property type="match status" value="1"/>
</dbReference>
<dbReference type="PROSITE" id="PS51186">
    <property type="entry name" value="GNAT"/>
    <property type="match status" value="1"/>
</dbReference>
<organism>
    <name type="scientific">Klebsiella aerogenes</name>
    <name type="common">Enterobacter aerogenes</name>
    <dbReference type="NCBI Taxonomy" id="548"/>
    <lineage>
        <taxon>Bacteria</taxon>
        <taxon>Pseudomonadati</taxon>
        <taxon>Pseudomonadota</taxon>
        <taxon>Gammaproteobacteria</taxon>
        <taxon>Enterobacterales</taxon>
        <taxon>Enterobacteriaceae</taxon>
        <taxon>Klebsiella/Raoultella group</taxon>
        <taxon>Klebsiella</taxon>
    </lineage>
</organism>
<gene>
    <name type="primary">aacA7</name>
</gene>
<evidence type="ECO:0000250" key="1"/>
<evidence type="ECO:0000255" key="2">
    <source>
        <dbReference type="PROSITE-ProRule" id="PRU00532"/>
    </source>
</evidence>
<evidence type="ECO:0000269" key="3">
    <source>
    </source>
</evidence>
<keyword id="KW-0012">Acyltransferase</keyword>
<keyword id="KW-0046">Antibiotic resistance</keyword>
<keyword id="KW-0614">Plasmid</keyword>
<keyword id="KW-0808">Transferase</keyword>
<geneLocation type="plasmid">
    <name>pBWH301</name>
</geneLocation>
<sequence>MDSSPLVRPVETTDSASWLSMRCELWPDGTCQEHQSEIAEFLSGKVARPAAVLIAVAPDGEALGFAELSIRPYAEECYSGNVAFLEGWYVVPSARRQGVGVALVKAAEHWARGRGCTEFASDTQLTNSASTSAHLAAGFTEVAQVRCFRKPL</sequence>
<proteinExistence type="inferred from homology"/>
<comment type="function">
    <text evidence="3">Catalyzes the transfer of an acetyl group from acetyl-CoA to the 6'-amino group of aminoglycoside molecules conferring resistance to antibiotics containing the purpurosamine ring including amikacin.</text>
</comment>
<comment type="catalytic activity">
    <reaction>
        <text>kanamycin B + acetyl-CoA = N(6')-acetylkanamycin B + CoA + H(+)</text>
        <dbReference type="Rhea" id="RHEA:16449"/>
        <dbReference type="ChEBI" id="CHEBI:15378"/>
        <dbReference type="ChEBI" id="CHEBI:57287"/>
        <dbReference type="ChEBI" id="CHEBI:57288"/>
        <dbReference type="ChEBI" id="CHEBI:58390"/>
        <dbReference type="ChEBI" id="CHEBI:58549"/>
        <dbReference type="EC" id="2.3.1.82"/>
    </reaction>
</comment>
<comment type="subunit">
    <text evidence="1">Homodimer.</text>
</comment>
<protein>
    <recommendedName>
        <fullName>Aminoglycoside N(6')-acetyltransferase type 1</fullName>
        <ecNumber>2.3.1.82</ecNumber>
    </recommendedName>
    <alternativeName>
        <fullName>AAC(6')-Il</fullName>
    </alternativeName>
    <alternativeName>
        <fullName>Aminoglycoside resistance protein</fullName>
    </alternativeName>
</protein>
<feature type="chain" id="PRO_0000068555" description="Aminoglycoside N(6')-acetyltransferase type 1">
    <location>
        <begin position="1"/>
        <end position="152"/>
    </location>
</feature>
<feature type="domain" description="N-acetyltransferase" evidence="2">
    <location>
        <begin position="5"/>
        <end position="152"/>
    </location>
</feature>
<feature type="binding site" evidence="1">
    <location>
        <position position="26"/>
    </location>
    <ligand>
        <name>substrate</name>
    </ligand>
</feature>
<feature type="binding site" evidence="1">
    <location>
        <position position="73"/>
    </location>
    <ligand>
        <name>substrate</name>
    </ligand>
</feature>
<feature type="binding site" evidence="1">
    <location>
        <position position="86"/>
    </location>
    <ligand>
        <name>substrate</name>
    </ligand>
</feature>
<feature type="binding site" evidence="1">
    <location>
        <position position="122"/>
    </location>
    <ligand>
        <name>substrate</name>
    </ligand>
</feature>
<feature type="binding site" evidence="1">
    <location>
        <position position="127"/>
    </location>
    <ligand>
        <name>acetyl-CoA</name>
        <dbReference type="ChEBI" id="CHEBI:57288"/>
    </ligand>
</feature>
<reference key="1">
    <citation type="journal article" date="1995" name="Antimicrob. Agents Chemother.">
        <title>New mobile gene cassettes containing an aminoglycoside resistance gene, aacA7, and a chloramphenicol resistance gene, catB3, in an integron in pBWH301.</title>
        <authorList>
            <person name="Bunny K.L."/>
            <person name="Hall R.M."/>
            <person name="Stokes H.W."/>
        </authorList>
    </citation>
    <scope>NUCLEOTIDE SEQUENCE [GENOMIC DNA]</scope>
    <scope>FUNCTION</scope>
    <source>
        <plasmid>pBWH301</plasmid>
    </source>
</reference>
<name>AAC6_KLEAE</name>
<accession>P50858</accession>